<organism>
    <name type="scientific">Ostreid herpesvirus 1 (isolate France)</name>
    <name type="common">OsHV-1</name>
    <name type="synonym">Pacific oyster herpesvirus</name>
    <dbReference type="NCBI Taxonomy" id="654903"/>
    <lineage>
        <taxon>Viruses</taxon>
        <taxon>Duplodnaviria</taxon>
        <taxon>Heunggongvirae</taxon>
        <taxon>Peploviricota</taxon>
        <taxon>Herviviricetes</taxon>
        <taxon>Herpesvirales</taxon>
        <taxon>Malacoherpesviridae</taxon>
        <taxon>Ostreavirus</taxon>
        <taxon>Ostreavirus ostreidmalaco1</taxon>
        <taxon>Ostreid herpesvirus 1</taxon>
    </lineage>
</organism>
<dbReference type="EMBL" id="AY509253">
    <property type="protein sequence ID" value="AAS00988.1"/>
    <property type="molecule type" value="Genomic_DNA"/>
</dbReference>
<dbReference type="RefSeq" id="YP_024641.1">
    <property type="nucleotide sequence ID" value="NC_005881.2"/>
</dbReference>
<dbReference type="KEGG" id="vg:2948218"/>
<dbReference type="Proteomes" id="UP000007021">
    <property type="component" value="Segment"/>
</dbReference>
<name>Y102_OSHVF</name>
<reference key="1">
    <citation type="journal article" date="2005" name="J. Gen. Virol.">
        <title>A novel class of herpesvirus with bivalve hosts.</title>
        <authorList>
            <person name="Davison A.J."/>
            <person name="Trus B.L."/>
            <person name="Cheng N."/>
            <person name="Steven A.C."/>
            <person name="Watson M.S."/>
            <person name="Cunningham C."/>
            <person name="Le Deuff R.M."/>
            <person name="Renault T."/>
        </authorList>
    </citation>
    <scope>NUCLEOTIDE SEQUENCE [LARGE SCALE GENOMIC DNA]</scope>
</reference>
<sequence length="762" mass="87097">MTNRYHPYRGRELLNSAIDHVVGRWNDADDVNKELEKLRADVDTYKTKFRNLELTRNATDTINVNITHAVEPTETEQTPGVVPQPTTVLSTSIEDYDRSGNEYRRLIGSLKYDDIVKSIYALRERMVYDRDALLERARTQFANPGFLEITSSHIQDALGNTQYKDWKMDTTIKIFSIAKHRIYAHMNREVRLIQQEPEPIDARLKFITTIYPSFWFKELIERGLQEDYNDVLYVEQKNLSLIDGANRSELAKAQSWAPDIHYLISRMCSSLCMVPFIPLTGNNMNHAVYTDTQLLIHYAAFSNPSLVNYKEMLKDEFAYVRDHKSALFRAFETTCIKFKKYKDKLAYKRQGTVVAPTAVNINGTPVEGARGPTPVPPEIMDNLLPFLIDNIIRYRAEQREEAARGSRSIMIERDSPIGRFINFNNKSARELESLVKKLTRDYAMSEREVSLKGLSGQELPVLDFTRTLFTQMMTAAMTCNLMANRYTFFDRVINLVDETTPTPRKDVLYTPSLAAFPGALFYTLMYDQRHPLTPGTSNSSASPYNIAEYATDPVRRNLYSWMKNFFRLVPGIKASKMNTKVYGLAGKYKPNSMPSCEGPGNPSDIKEMMKGLRFINLDTMIQFSNNNKQACNMVLADYLTKIQKTELIEDLSDFYGYMFDLTPPSQGVKLIKNDQFVLPDFNAGNFARFSSAPIAYYIETIKIEERETQRENYRSSYRSDEGFTSLFAGLLEQQQRPRVAAAAPPPPPQPPAAAVPTTQAST</sequence>
<evidence type="ECO:0000256" key="1">
    <source>
        <dbReference type="SAM" id="MobiDB-lite"/>
    </source>
</evidence>
<proteinExistence type="predicted"/>
<accession>Q6R7C7</accession>
<protein>
    <recommendedName>
        <fullName>Uncharacterized protein ORF102</fullName>
    </recommendedName>
</protein>
<organismHost>
    <name type="scientific">Magallana gigas</name>
    <name type="common">Pacific oyster</name>
    <name type="synonym">Crassostrea gigas</name>
    <dbReference type="NCBI Taxonomy" id="29159"/>
</organismHost>
<organismHost>
    <name type="scientific">Pecten maximus</name>
    <name type="common">King scallop</name>
    <name type="synonym">Pilgrim's clam</name>
    <dbReference type="NCBI Taxonomy" id="6579"/>
</organismHost>
<keyword id="KW-1185">Reference proteome</keyword>
<feature type="chain" id="PRO_0000385118" description="Uncharacterized protein ORF102">
    <location>
        <begin position="1"/>
        <end position="762"/>
    </location>
</feature>
<feature type="region of interest" description="Disordered" evidence="1">
    <location>
        <begin position="734"/>
        <end position="762"/>
    </location>
</feature>
<feature type="compositionally biased region" description="Pro residues" evidence="1">
    <location>
        <begin position="743"/>
        <end position="753"/>
    </location>
</feature>
<gene>
    <name type="ORF">ORF102</name>
</gene>